<name>ARAA_ECOL5</name>
<sequence>MTIFDNYEVWFVIGSQHLYGPETLRQVTQHAEHVVNALNTEAKLPCKLVLKPLGTTPDEITAICRDANYDDRCAGLVVWLHTFSPAKMWINGLTMLNKPLLQFHTQFNAALPWDSIDMDFMNLNQTAHGGREFGFIGARMRQQHAVVTGHWQDKQAHERIGSWMRQAVSKQDTRHLKVCRFGDNMREVAVTDGDKVAAQIKFGFSVNTWAVGDLVQVVNSISDGDVNALVDEYESCYTMTPATQIHGEKRQNVLEAARIELGMKRFLEQGGFHAFTTTFEDLHGLKQLPGLAVQRLMQQGYGFAGEGDWKTAALLRIMKVMSTGLQGGTSFMEDYTYHFEKGNDLVLGSHMLEVCPSIAVEEKPILDVQHLGIGGKDDPARLIFNTQTGPAIVASLIDLGDRYRLLVNCIDTVKTPHSLPKLPVANALWKAQPDLPTASEAWILAGGAHHTVFSHALNLNDMRQFAEMHDIEITVIDNDTRLPAFKDALRWNEVYYGFRR</sequence>
<reference key="1">
    <citation type="journal article" date="2006" name="Mol. Microbiol.">
        <title>Role of pathogenicity island-associated integrases in the genome plasticity of uropathogenic Escherichia coli strain 536.</title>
        <authorList>
            <person name="Hochhut B."/>
            <person name="Wilde C."/>
            <person name="Balling G."/>
            <person name="Middendorf B."/>
            <person name="Dobrindt U."/>
            <person name="Brzuszkiewicz E."/>
            <person name="Gottschalk G."/>
            <person name="Carniel E."/>
            <person name="Hacker J."/>
        </authorList>
    </citation>
    <scope>NUCLEOTIDE SEQUENCE [LARGE SCALE GENOMIC DNA]</scope>
    <source>
        <strain>536 / UPEC</strain>
    </source>
</reference>
<feature type="chain" id="PRO_0000259338" description="L-arabinose isomerase">
    <location>
        <begin position="1"/>
        <end position="500"/>
    </location>
</feature>
<feature type="binding site" evidence="1">
    <location>
        <position position="306"/>
    </location>
    <ligand>
        <name>Mn(2+)</name>
        <dbReference type="ChEBI" id="CHEBI:29035"/>
    </ligand>
</feature>
<feature type="binding site" evidence="1">
    <location>
        <position position="333"/>
    </location>
    <ligand>
        <name>Mn(2+)</name>
        <dbReference type="ChEBI" id="CHEBI:29035"/>
    </ligand>
</feature>
<feature type="binding site" evidence="1">
    <location>
        <position position="350"/>
    </location>
    <ligand>
        <name>Mn(2+)</name>
        <dbReference type="ChEBI" id="CHEBI:29035"/>
    </ligand>
</feature>
<feature type="binding site" evidence="1">
    <location>
        <position position="450"/>
    </location>
    <ligand>
        <name>Mn(2+)</name>
        <dbReference type="ChEBI" id="CHEBI:29035"/>
    </ligand>
</feature>
<comment type="function">
    <text evidence="1">Catalyzes the conversion of L-arabinose to L-ribulose.</text>
</comment>
<comment type="catalytic activity">
    <reaction evidence="1">
        <text>beta-L-arabinopyranose = L-ribulose</text>
        <dbReference type="Rhea" id="RHEA:14821"/>
        <dbReference type="ChEBI" id="CHEBI:16880"/>
        <dbReference type="ChEBI" id="CHEBI:40886"/>
        <dbReference type="EC" id="5.3.1.4"/>
    </reaction>
</comment>
<comment type="cofactor">
    <cofactor evidence="1">
        <name>Mn(2+)</name>
        <dbReference type="ChEBI" id="CHEBI:29035"/>
    </cofactor>
    <text evidence="1">Binds 1 Mn(2+) ion per subunit.</text>
</comment>
<comment type="pathway">
    <text evidence="1">Carbohydrate degradation; L-arabinose degradation via L-ribulose; D-xylulose 5-phosphate from L-arabinose (bacterial route): step 1/3.</text>
</comment>
<comment type="subunit">
    <text evidence="1">Homohexamer.</text>
</comment>
<comment type="similarity">
    <text evidence="1">Belongs to the arabinose isomerase family.</text>
</comment>
<accession>Q0TLS8</accession>
<proteinExistence type="inferred from homology"/>
<gene>
    <name evidence="1" type="primary">araA</name>
    <name type="ordered locus">ECP_0063</name>
</gene>
<keyword id="KW-0054">Arabinose catabolism</keyword>
<keyword id="KW-0119">Carbohydrate metabolism</keyword>
<keyword id="KW-0413">Isomerase</keyword>
<keyword id="KW-0464">Manganese</keyword>
<keyword id="KW-0479">Metal-binding</keyword>
<evidence type="ECO:0000255" key="1">
    <source>
        <dbReference type="HAMAP-Rule" id="MF_00519"/>
    </source>
</evidence>
<dbReference type="EC" id="5.3.1.4" evidence="1"/>
<dbReference type="EMBL" id="CP000247">
    <property type="protein sequence ID" value="ABG68103.1"/>
    <property type="molecule type" value="Genomic_DNA"/>
</dbReference>
<dbReference type="RefSeq" id="WP_000151734.1">
    <property type="nucleotide sequence ID" value="NC_008253.1"/>
</dbReference>
<dbReference type="SMR" id="Q0TLS8"/>
<dbReference type="GeneID" id="93777375"/>
<dbReference type="KEGG" id="ecp:ECP_0063"/>
<dbReference type="HOGENOM" id="CLU_045663_0_0_6"/>
<dbReference type="UniPathway" id="UPA00145">
    <property type="reaction ID" value="UER00565"/>
</dbReference>
<dbReference type="Proteomes" id="UP000009182">
    <property type="component" value="Chromosome"/>
</dbReference>
<dbReference type="GO" id="GO:0005829">
    <property type="term" value="C:cytosol"/>
    <property type="evidence" value="ECO:0007669"/>
    <property type="project" value="TreeGrafter"/>
</dbReference>
<dbReference type="GO" id="GO:0008733">
    <property type="term" value="F:L-arabinose isomerase activity"/>
    <property type="evidence" value="ECO:0007669"/>
    <property type="project" value="UniProtKB-UniRule"/>
</dbReference>
<dbReference type="GO" id="GO:0030145">
    <property type="term" value="F:manganese ion binding"/>
    <property type="evidence" value="ECO:0007669"/>
    <property type="project" value="UniProtKB-UniRule"/>
</dbReference>
<dbReference type="GO" id="GO:0019569">
    <property type="term" value="P:L-arabinose catabolic process to xylulose 5-phosphate"/>
    <property type="evidence" value="ECO:0007669"/>
    <property type="project" value="UniProtKB-UniRule"/>
</dbReference>
<dbReference type="CDD" id="cd03557">
    <property type="entry name" value="L-arabinose_isomerase"/>
    <property type="match status" value="1"/>
</dbReference>
<dbReference type="FunFam" id="3.40.50.10940:FF:000001">
    <property type="entry name" value="L-arabinose isomerase"/>
    <property type="match status" value="1"/>
</dbReference>
<dbReference type="Gene3D" id="3.40.50.10940">
    <property type="match status" value="1"/>
</dbReference>
<dbReference type="HAMAP" id="MF_00519">
    <property type="entry name" value="Arabinose_Isome"/>
    <property type="match status" value="1"/>
</dbReference>
<dbReference type="InterPro" id="IPR024664">
    <property type="entry name" value="Ara_Isoase_C"/>
</dbReference>
<dbReference type="InterPro" id="IPR055390">
    <property type="entry name" value="AraA_central"/>
</dbReference>
<dbReference type="InterPro" id="IPR055389">
    <property type="entry name" value="AraA_N"/>
</dbReference>
<dbReference type="InterPro" id="IPR038583">
    <property type="entry name" value="AraA_N_sf"/>
</dbReference>
<dbReference type="InterPro" id="IPR004216">
    <property type="entry name" value="Fuc/Ara_isomerase_C"/>
</dbReference>
<dbReference type="InterPro" id="IPR009015">
    <property type="entry name" value="Fucose_isomerase_N/cen_sf"/>
</dbReference>
<dbReference type="InterPro" id="IPR003762">
    <property type="entry name" value="Lara_isomerase"/>
</dbReference>
<dbReference type="NCBIfam" id="NF002795">
    <property type="entry name" value="PRK02929.1"/>
    <property type="match status" value="1"/>
</dbReference>
<dbReference type="PANTHER" id="PTHR38464">
    <property type="entry name" value="L-ARABINOSE ISOMERASE"/>
    <property type="match status" value="1"/>
</dbReference>
<dbReference type="PANTHER" id="PTHR38464:SF1">
    <property type="entry name" value="L-ARABINOSE ISOMERASE"/>
    <property type="match status" value="1"/>
</dbReference>
<dbReference type="Pfam" id="PF24856">
    <property type="entry name" value="AraA_central"/>
    <property type="match status" value="1"/>
</dbReference>
<dbReference type="Pfam" id="PF02610">
    <property type="entry name" value="AraA_N"/>
    <property type="match status" value="1"/>
</dbReference>
<dbReference type="Pfam" id="PF11762">
    <property type="entry name" value="Arabinose_Iso_C"/>
    <property type="match status" value="1"/>
</dbReference>
<dbReference type="PIRSF" id="PIRSF001478">
    <property type="entry name" value="L-ara_isomerase"/>
    <property type="match status" value="1"/>
</dbReference>
<dbReference type="SUPFAM" id="SSF50443">
    <property type="entry name" value="FucI/AraA C-terminal domain-like"/>
    <property type="match status" value="1"/>
</dbReference>
<dbReference type="SUPFAM" id="SSF53743">
    <property type="entry name" value="FucI/AraA N-terminal and middle domains"/>
    <property type="match status" value="1"/>
</dbReference>
<organism>
    <name type="scientific">Escherichia coli O6:K15:H31 (strain 536 / UPEC)</name>
    <dbReference type="NCBI Taxonomy" id="362663"/>
    <lineage>
        <taxon>Bacteria</taxon>
        <taxon>Pseudomonadati</taxon>
        <taxon>Pseudomonadota</taxon>
        <taxon>Gammaproteobacteria</taxon>
        <taxon>Enterobacterales</taxon>
        <taxon>Enterobacteriaceae</taxon>
        <taxon>Escherichia</taxon>
    </lineage>
</organism>
<protein>
    <recommendedName>
        <fullName evidence="1">L-arabinose isomerase</fullName>
        <ecNumber evidence="1">5.3.1.4</ecNumber>
    </recommendedName>
</protein>